<evidence type="ECO:0000250" key="1"/>
<evidence type="ECO:0000255" key="2"/>
<evidence type="ECO:0000255" key="3">
    <source>
        <dbReference type="PROSITE-ProRule" id="PRU10052"/>
    </source>
</evidence>
<evidence type="ECO:0000269" key="4">
    <source>
    </source>
</evidence>
<evidence type="ECO:0000269" key="5">
    <source>
    </source>
</evidence>
<evidence type="ECO:0000305" key="6"/>
<organism>
    <name type="scientific">Arabidopsis thaliana</name>
    <name type="common">Mouse-ear cress</name>
    <dbReference type="NCBI Taxonomy" id="3702"/>
    <lineage>
        <taxon>Eukaryota</taxon>
        <taxon>Viridiplantae</taxon>
        <taxon>Streptophyta</taxon>
        <taxon>Embryophyta</taxon>
        <taxon>Tracheophyta</taxon>
        <taxon>Spermatophyta</taxon>
        <taxon>Magnoliopsida</taxon>
        <taxon>eudicotyledons</taxon>
        <taxon>Gunneridae</taxon>
        <taxon>Pentapetalae</taxon>
        <taxon>rosids</taxon>
        <taxon>malvids</taxon>
        <taxon>Brassicales</taxon>
        <taxon>Brassicaceae</taxon>
        <taxon>Camelineae</taxon>
        <taxon>Arabidopsis</taxon>
    </lineage>
</organism>
<proteinExistence type="evidence at protein level"/>
<gene>
    <name type="ordered locus">At1g80170</name>
    <name type="ORF">F18B13.25</name>
</gene>
<accession>Q94AJ5</accession>
<accession>Q9SSC2</accession>
<comment type="catalytic activity">
    <reaction>
        <text>(1,4-alpha-D-galacturonosyl)n+m + H2O = (1,4-alpha-D-galacturonosyl)n + (1,4-alpha-D-galacturonosyl)m.</text>
        <dbReference type="EC" id="3.2.1.15"/>
    </reaction>
</comment>
<comment type="interaction">
    <interactant intactId="EBI-4457426">
        <id>Q94AJ5</id>
    </interactant>
    <interactant intactId="EBI-4424378">
        <id>Q8VZW1</id>
        <label>NIP1-1</label>
    </interactant>
    <organismsDiffer>false</organismsDiffer>
    <experiments>2</experiments>
</comment>
<comment type="subcellular location">
    <subcellularLocation>
        <location evidence="1">Secreted</location>
        <location evidence="1">Cell wall</location>
    </subcellularLocation>
</comment>
<comment type="tissue specificity">
    <text evidence="4 5">Expressed in young, mature and dehiscing anthers. Found in stems, but not in roots or in abscission zone of floral organs.</text>
</comment>
<comment type="similarity">
    <text evidence="6">Belongs to the glycosyl hydrolase 28 family.</text>
</comment>
<comment type="sequence caution" evidence="6">
    <conflict type="erroneous gene model prediction">
        <sequence resource="EMBL-CDS" id="AAD55489"/>
    </conflict>
</comment>
<protein>
    <recommendedName>
        <fullName>Probable polygalacturonase At1g80170</fullName>
        <shortName>PG</shortName>
        <ecNumber>3.2.1.15</ecNumber>
    </recommendedName>
    <alternativeName>
        <fullName>Pectinase At1g80170</fullName>
    </alternativeName>
</protein>
<sequence>MSYSRGGTLVTLLLLLVVASSLALTANANSFESLLQLPRRQSRSTRPRSERLLHVGNFGAKGNGVTDDTKAFADAWKTACSSKVKTRILVPENYTCLLRPIDLSGPCKARLTLQISGTIIAPNDPDVWEGLNRRKWLYFHGLSRLTVEGGGTVNGMGQEWWERSCKHNHSNPCRGAPTALTFHKCKNMRVENLNVIDSQQMHIALTSCRRVTISGLKVIAPATSPNTDGIHISVSRGIVIDNTTVSTGDDCISIVKNSTQISISNIICGPGHGISIGSLGKSKSWEEVRDITVDTAIISDTANGVRIKTWQGGSGLVSKIIFRNIKMNNVSNPIIIDQYYCDSRKPCANQTSAISIENISFVHVRGTSASKEAIKISCSDSSPCRNILLQDIDLEPSNGDGFTESFCWEAYGSSSGQVYPPPCLSDDTSFLEQSVQSGITSAYL</sequence>
<name>PGLR5_ARATH</name>
<feature type="signal peptide" evidence="2">
    <location>
        <begin position="1"/>
        <end position="28"/>
    </location>
</feature>
<feature type="chain" id="PRO_0000367917" description="Probable polygalacturonase At1g80170">
    <location>
        <begin position="29"/>
        <end position="444"/>
    </location>
</feature>
<feature type="repeat" description="PbH1 1">
    <location>
        <begin position="208"/>
        <end position="234"/>
    </location>
</feature>
<feature type="repeat" description="PbH1 2">
    <location>
        <begin position="235"/>
        <end position="256"/>
    </location>
</feature>
<feature type="repeat" description="PbH1 3">
    <location>
        <begin position="258"/>
        <end position="278"/>
    </location>
</feature>
<feature type="repeat" description="PbH1 4">
    <location>
        <begin position="288"/>
        <end position="309"/>
    </location>
</feature>
<feature type="repeat" description="PbH1 5">
    <location>
        <begin position="317"/>
        <end position="338"/>
    </location>
</feature>
<feature type="repeat" description="PbH1 6">
    <location>
        <begin position="351"/>
        <end position="378"/>
    </location>
</feature>
<feature type="active site" description="Proton donor" evidence="3">
    <location>
        <position position="249"/>
    </location>
</feature>
<feature type="active site" evidence="3">
    <location>
        <position position="272"/>
    </location>
</feature>
<keyword id="KW-0134">Cell wall</keyword>
<keyword id="KW-0961">Cell wall biogenesis/degradation</keyword>
<keyword id="KW-0326">Glycosidase</keyword>
<keyword id="KW-0378">Hydrolase</keyword>
<keyword id="KW-1185">Reference proteome</keyword>
<keyword id="KW-0677">Repeat</keyword>
<keyword id="KW-0964">Secreted</keyword>
<keyword id="KW-0732">Signal</keyword>
<reference key="1">
    <citation type="journal article" date="2000" name="Nature">
        <title>Sequence and analysis of chromosome 1 of the plant Arabidopsis thaliana.</title>
        <authorList>
            <person name="Theologis A."/>
            <person name="Ecker J.R."/>
            <person name="Palm C.J."/>
            <person name="Federspiel N.A."/>
            <person name="Kaul S."/>
            <person name="White O."/>
            <person name="Alonso J."/>
            <person name="Altafi H."/>
            <person name="Araujo R."/>
            <person name="Bowman C.L."/>
            <person name="Brooks S.Y."/>
            <person name="Buehler E."/>
            <person name="Chan A."/>
            <person name="Chao Q."/>
            <person name="Chen H."/>
            <person name="Cheuk R.F."/>
            <person name="Chin C.W."/>
            <person name="Chung M.K."/>
            <person name="Conn L."/>
            <person name="Conway A.B."/>
            <person name="Conway A.R."/>
            <person name="Creasy T.H."/>
            <person name="Dewar K."/>
            <person name="Dunn P."/>
            <person name="Etgu P."/>
            <person name="Feldblyum T.V."/>
            <person name="Feng J.-D."/>
            <person name="Fong B."/>
            <person name="Fujii C.Y."/>
            <person name="Gill J.E."/>
            <person name="Goldsmith A.D."/>
            <person name="Haas B."/>
            <person name="Hansen N.F."/>
            <person name="Hughes B."/>
            <person name="Huizar L."/>
            <person name="Hunter J.L."/>
            <person name="Jenkins J."/>
            <person name="Johnson-Hopson C."/>
            <person name="Khan S."/>
            <person name="Khaykin E."/>
            <person name="Kim C.J."/>
            <person name="Koo H.L."/>
            <person name="Kremenetskaia I."/>
            <person name="Kurtz D.B."/>
            <person name="Kwan A."/>
            <person name="Lam B."/>
            <person name="Langin-Hooper S."/>
            <person name="Lee A."/>
            <person name="Lee J.M."/>
            <person name="Lenz C.A."/>
            <person name="Li J.H."/>
            <person name="Li Y.-P."/>
            <person name="Lin X."/>
            <person name="Liu S.X."/>
            <person name="Liu Z.A."/>
            <person name="Luros J.S."/>
            <person name="Maiti R."/>
            <person name="Marziali A."/>
            <person name="Militscher J."/>
            <person name="Miranda M."/>
            <person name="Nguyen M."/>
            <person name="Nierman W.C."/>
            <person name="Osborne B.I."/>
            <person name="Pai G."/>
            <person name="Peterson J."/>
            <person name="Pham P.K."/>
            <person name="Rizzo M."/>
            <person name="Rooney T."/>
            <person name="Rowley D."/>
            <person name="Sakano H."/>
            <person name="Salzberg S.L."/>
            <person name="Schwartz J.R."/>
            <person name="Shinn P."/>
            <person name="Southwick A.M."/>
            <person name="Sun H."/>
            <person name="Tallon L.J."/>
            <person name="Tambunga G."/>
            <person name="Toriumi M.J."/>
            <person name="Town C.D."/>
            <person name="Utterback T."/>
            <person name="Van Aken S."/>
            <person name="Vaysberg M."/>
            <person name="Vysotskaia V.S."/>
            <person name="Walker M."/>
            <person name="Wu D."/>
            <person name="Yu G."/>
            <person name="Fraser C.M."/>
            <person name="Venter J.C."/>
            <person name="Davis R.W."/>
        </authorList>
    </citation>
    <scope>NUCLEOTIDE SEQUENCE [LARGE SCALE GENOMIC DNA]</scope>
    <source>
        <strain>cv. Columbia</strain>
    </source>
</reference>
<reference key="2">
    <citation type="journal article" date="2017" name="Plant J.">
        <title>Araport11: a complete reannotation of the Arabidopsis thaliana reference genome.</title>
        <authorList>
            <person name="Cheng C.Y."/>
            <person name="Krishnakumar V."/>
            <person name="Chan A.P."/>
            <person name="Thibaud-Nissen F."/>
            <person name="Schobel S."/>
            <person name="Town C.D."/>
        </authorList>
    </citation>
    <scope>GENOME REANNOTATION</scope>
    <source>
        <strain>cv. Columbia</strain>
    </source>
</reference>
<reference key="3">
    <citation type="journal article" date="2003" name="Science">
        <title>Empirical analysis of transcriptional activity in the Arabidopsis genome.</title>
        <authorList>
            <person name="Yamada K."/>
            <person name="Lim J."/>
            <person name="Dale J.M."/>
            <person name="Chen H."/>
            <person name="Shinn P."/>
            <person name="Palm C.J."/>
            <person name="Southwick A.M."/>
            <person name="Wu H.C."/>
            <person name="Kim C.J."/>
            <person name="Nguyen M."/>
            <person name="Pham P.K."/>
            <person name="Cheuk R.F."/>
            <person name="Karlin-Newmann G."/>
            <person name="Liu S.X."/>
            <person name="Lam B."/>
            <person name="Sakano H."/>
            <person name="Wu T."/>
            <person name="Yu G."/>
            <person name="Miranda M."/>
            <person name="Quach H.L."/>
            <person name="Tripp M."/>
            <person name="Chang C.H."/>
            <person name="Lee J.M."/>
            <person name="Toriumi M.J."/>
            <person name="Chan M.M."/>
            <person name="Tang C.C."/>
            <person name="Onodera C.S."/>
            <person name="Deng J.M."/>
            <person name="Akiyama K."/>
            <person name="Ansari Y."/>
            <person name="Arakawa T."/>
            <person name="Banh J."/>
            <person name="Banno F."/>
            <person name="Bowser L."/>
            <person name="Brooks S.Y."/>
            <person name="Carninci P."/>
            <person name="Chao Q."/>
            <person name="Choy N."/>
            <person name="Enju A."/>
            <person name="Goldsmith A.D."/>
            <person name="Gurjal M."/>
            <person name="Hansen N.F."/>
            <person name="Hayashizaki Y."/>
            <person name="Johnson-Hopson C."/>
            <person name="Hsuan V.W."/>
            <person name="Iida K."/>
            <person name="Karnes M."/>
            <person name="Khan S."/>
            <person name="Koesema E."/>
            <person name="Ishida J."/>
            <person name="Jiang P.X."/>
            <person name="Jones T."/>
            <person name="Kawai J."/>
            <person name="Kamiya A."/>
            <person name="Meyers C."/>
            <person name="Nakajima M."/>
            <person name="Narusaka M."/>
            <person name="Seki M."/>
            <person name="Sakurai T."/>
            <person name="Satou M."/>
            <person name="Tamse R."/>
            <person name="Vaysberg M."/>
            <person name="Wallender E.K."/>
            <person name="Wong C."/>
            <person name="Yamamura Y."/>
            <person name="Yuan S."/>
            <person name="Shinozaki K."/>
            <person name="Davis R.W."/>
            <person name="Theologis A."/>
            <person name="Ecker J.R."/>
        </authorList>
    </citation>
    <scope>NUCLEOTIDE SEQUENCE [LARGE SCALE MRNA]</scope>
    <source>
        <strain>cv. Columbia</strain>
    </source>
</reference>
<reference key="4">
    <citation type="journal article" date="2006" name="Genome Biol.">
        <title>Patterns of expansion and expression divergence in the plant polygalacturonase gene family.</title>
        <authorList>
            <person name="Kim J."/>
            <person name="Shiu S.-H."/>
            <person name="Thoma S."/>
            <person name="Li W.-H."/>
            <person name="Patterson S.E."/>
        </authorList>
    </citation>
    <scope>TISSUE SPECIFICITY</scope>
</reference>
<reference key="5">
    <citation type="journal article" date="2007" name="J. Exp. Bot.">
        <title>Expression of polygalacturonases and evidence to support their role during cell separation processes in Arabidopsis thaliana.</title>
        <authorList>
            <person name="Gonzalez-Carranza Z.H."/>
            <person name="Elliott K.A."/>
            <person name="Roberts J.A."/>
        </authorList>
    </citation>
    <scope>FUNCTION</scope>
    <scope>TISSUE SPECIFICITY</scope>
</reference>
<dbReference type="EC" id="3.2.1.15"/>
<dbReference type="EMBL" id="AC009322">
    <property type="protein sequence ID" value="AAD55489.1"/>
    <property type="status" value="ALT_SEQ"/>
    <property type="molecule type" value="Genomic_DNA"/>
</dbReference>
<dbReference type="EMBL" id="CP002684">
    <property type="protein sequence ID" value="AEE36366.1"/>
    <property type="molecule type" value="Genomic_DNA"/>
</dbReference>
<dbReference type="EMBL" id="AY046002">
    <property type="protein sequence ID" value="AAK76676.1"/>
    <property type="molecule type" value="mRNA"/>
</dbReference>
<dbReference type="EMBL" id="AY142668">
    <property type="protein sequence ID" value="AAN13206.1"/>
    <property type="molecule type" value="mRNA"/>
</dbReference>
<dbReference type="PIR" id="D96833">
    <property type="entry name" value="D96833"/>
</dbReference>
<dbReference type="RefSeq" id="NP_565232.1">
    <property type="nucleotide sequence ID" value="NM_106666.4"/>
</dbReference>
<dbReference type="SMR" id="Q94AJ5"/>
<dbReference type="BioGRID" id="29575">
    <property type="interactions" value="2"/>
</dbReference>
<dbReference type="FunCoup" id="Q94AJ5">
    <property type="interactions" value="87"/>
</dbReference>
<dbReference type="IntAct" id="Q94AJ5">
    <property type="interactions" value="2"/>
</dbReference>
<dbReference type="STRING" id="3702.Q94AJ5"/>
<dbReference type="CAZy" id="GH28">
    <property type="family name" value="Glycoside Hydrolase Family 28"/>
</dbReference>
<dbReference type="iPTMnet" id="Q94AJ5"/>
<dbReference type="PaxDb" id="3702-AT1G80170.1"/>
<dbReference type="ProteomicsDB" id="236406"/>
<dbReference type="EnsemblPlants" id="AT1G80170.1">
    <property type="protein sequence ID" value="AT1G80170.1"/>
    <property type="gene ID" value="AT1G80170"/>
</dbReference>
<dbReference type="GeneID" id="844357"/>
<dbReference type="Gramene" id="AT1G80170.1">
    <property type="protein sequence ID" value="AT1G80170.1"/>
    <property type="gene ID" value="AT1G80170"/>
</dbReference>
<dbReference type="KEGG" id="ath:AT1G80170"/>
<dbReference type="Araport" id="AT1G80170"/>
<dbReference type="TAIR" id="AT1G80170"/>
<dbReference type="eggNOG" id="ENOG502QRJW">
    <property type="taxonomic scope" value="Eukaryota"/>
</dbReference>
<dbReference type="HOGENOM" id="CLU_016031_2_3_1"/>
<dbReference type="InParanoid" id="Q94AJ5"/>
<dbReference type="OMA" id="DDSPCEG"/>
<dbReference type="PhylomeDB" id="Q94AJ5"/>
<dbReference type="BioCyc" id="ARA:AT1G80170-MONOMER"/>
<dbReference type="PRO" id="PR:Q94AJ5"/>
<dbReference type="Proteomes" id="UP000006548">
    <property type="component" value="Chromosome 1"/>
</dbReference>
<dbReference type="ExpressionAtlas" id="Q94AJ5">
    <property type="expression patterns" value="baseline and differential"/>
</dbReference>
<dbReference type="GO" id="GO:0005576">
    <property type="term" value="C:extracellular region"/>
    <property type="evidence" value="ECO:0007669"/>
    <property type="project" value="UniProtKB-KW"/>
</dbReference>
<dbReference type="GO" id="GO:0004650">
    <property type="term" value="F:polygalacturonase activity"/>
    <property type="evidence" value="ECO:0007669"/>
    <property type="project" value="UniProtKB-EC"/>
</dbReference>
<dbReference type="GO" id="GO:0005975">
    <property type="term" value="P:carbohydrate metabolic process"/>
    <property type="evidence" value="ECO:0007669"/>
    <property type="project" value="InterPro"/>
</dbReference>
<dbReference type="GO" id="GO:0071555">
    <property type="term" value="P:cell wall organization"/>
    <property type="evidence" value="ECO:0007669"/>
    <property type="project" value="UniProtKB-KW"/>
</dbReference>
<dbReference type="FunFam" id="2.160.20.10:FF:000032">
    <property type="entry name" value="Pectin lyase-like superfamily protein"/>
    <property type="match status" value="1"/>
</dbReference>
<dbReference type="Gene3D" id="2.160.20.10">
    <property type="entry name" value="Single-stranded right-handed beta-helix, Pectin lyase-like"/>
    <property type="match status" value="1"/>
</dbReference>
<dbReference type="InterPro" id="IPR000743">
    <property type="entry name" value="Glyco_hydro_28"/>
</dbReference>
<dbReference type="InterPro" id="IPR006626">
    <property type="entry name" value="PbH1"/>
</dbReference>
<dbReference type="InterPro" id="IPR012334">
    <property type="entry name" value="Pectin_lyas_fold"/>
</dbReference>
<dbReference type="InterPro" id="IPR011050">
    <property type="entry name" value="Pectin_lyase_fold/virulence"/>
</dbReference>
<dbReference type="PANTHER" id="PTHR31375">
    <property type="match status" value="1"/>
</dbReference>
<dbReference type="Pfam" id="PF00295">
    <property type="entry name" value="Glyco_hydro_28"/>
    <property type="match status" value="1"/>
</dbReference>
<dbReference type="SMART" id="SM00710">
    <property type="entry name" value="PbH1"/>
    <property type="match status" value="6"/>
</dbReference>
<dbReference type="SUPFAM" id="SSF51126">
    <property type="entry name" value="Pectin lyase-like"/>
    <property type="match status" value="1"/>
</dbReference>
<dbReference type="PROSITE" id="PS00502">
    <property type="entry name" value="POLYGALACTURONASE"/>
    <property type="match status" value="1"/>
</dbReference>